<name>GPX1_CALJA</name>
<proteinExistence type="evidence at transcript level"/>
<organism>
    <name type="scientific">Callithrix jacchus</name>
    <name type="common">White-tufted-ear marmoset</name>
    <dbReference type="NCBI Taxonomy" id="9483"/>
    <lineage>
        <taxon>Eukaryota</taxon>
        <taxon>Metazoa</taxon>
        <taxon>Chordata</taxon>
        <taxon>Craniata</taxon>
        <taxon>Vertebrata</taxon>
        <taxon>Euteleostomi</taxon>
        <taxon>Mammalia</taxon>
        <taxon>Eutheria</taxon>
        <taxon>Euarchontoglires</taxon>
        <taxon>Primates</taxon>
        <taxon>Haplorrhini</taxon>
        <taxon>Platyrrhini</taxon>
        <taxon>Cebidae</taxon>
        <taxon>Callitrichinae</taxon>
        <taxon>Callithrix</taxon>
        <taxon>Callithrix</taxon>
    </lineage>
</organism>
<evidence type="ECO:0000250" key="1"/>
<evidence type="ECO:0000250" key="2">
    <source>
        <dbReference type="UniProtKB" id="O70325"/>
    </source>
</evidence>
<evidence type="ECO:0000250" key="3">
    <source>
        <dbReference type="UniProtKB" id="P04041"/>
    </source>
</evidence>
<evidence type="ECO:0000250" key="4">
    <source>
        <dbReference type="UniProtKB" id="P07203"/>
    </source>
</evidence>
<evidence type="ECO:0000250" key="5">
    <source>
        <dbReference type="UniProtKB" id="P11352"/>
    </source>
</evidence>
<evidence type="ECO:0000305" key="6"/>
<comment type="function">
    <text evidence="5">Catalyzes the reduction of hydroperoxides in a glutathione-dependent manner thus regulating cellular redox homeostasis. Can reduce small soluble hydroperoxides such as H2O2, cumene hydroperoxide and tert-butyl hydroperoxide, as well as several fatty acid-derived hydroperoxides. In platelets catalyzes the reduction of 12-hydroperoxyeicosatetraenoic acid, the primary product of the arachidonate 12-lipoxygenase pathway.</text>
</comment>
<comment type="catalytic activity">
    <reaction evidence="5">
        <text>2 glutathione + H2O2 = glutathione disulfide + 2 H2O</text>
        <dbReference type="Rhea" id="RHEA:16833"/>
        <dbReference type="ChEBI" id="CHEBI:15377"/>
        <dbReference type="ChEBI" id="CHEBI:16240"/>
        <dbReference type="ChEBI" id="CHEBI:57925"/>
        <dbReference type="ChEBI" id="CHEBI:58297"/>
        <dbReference type="EC" id="1.11.1.9"/>
    </reaction>
    <physiologicalReaction direction="left-to-right" evidence="5">
        <dbReference type="Rhea" id="RHEA:16834"/>
    </physiologicalReaction>
</comment>
<comment type="catalytic activity">
    <reaction evidence="4">
        <text>a hydroperoxy polyunsaturated fatty acid + 2 glutathione = a hydroxy polyunsaturated fatty acid + glutathione disulfide + H2O</text>
        <dbReference type="Rhea" id="RHEA:19057"/>
        <dbReference type="ChEBI" id="CHEBI:15377"/>
        <dbReference type="ChEBI" id="CHEBI:57925"/>
        <dbReference type="ChEBI" id="CHEBI:58297"/>
        <dbReference type="ChEBI" id="CHEBI:131871"/>
        <dbReference type="ChEBI" id="CHEBI:134019"/>
        <dbReference type="EC" id="1.11.1.12"/>
    </reaction>
    <physiologicalReaction direction="left-to-right" evidence="4">
        <dbReference type="Rhea" id="RHEA:19058"/>
    </physiologicalReaction>
</comment>
<comment type="catalytic activity">
    <reaction evidence="4">
        <text>tert-butyl hydroperoxide + 2 glutathione = tert-butanol + glutathione disulfide + H2O</text>
        <dbReference type="Rhea" id="RHEA:69412"/>
        <dbReference type="ChEBI" id="CHEBI:15377"/>
        <dbReference type="ChEBI" id="CHEBI:45895"/>
        <dbReference type="ChEBI" id="CHEBI:57925"/>
        <dbReference type="ChEBI" id="CHEBI:58297"/>
        <dbReference type="ChEBI" id="CHEBI:64090"/>
    </reaction>
    <physiologicalReaction direction="left-to-right" evidence="4">
        <dbReference type="Rhea" id="RHEA:69413"/>
    </physiologicalReaction>
</comment>
<comment type="catalytic activity">
    <reaction evidence="4">
        <text>cumene hydroperoxide + 2 glutathione = 2-phenylpropan-2-ol + glutathione disulfide + H2O</text>
        <dbReference type="Rhea" id="RHEA:69651"/>
        <dbReference type="ChEBI" id="CHEBI:15377"/>
        <dbReference type="ChEBI" id="CHEBI:57925"/>
        <dbReference type="ChEBI" id="CHEBI:58297"/>
        <dbReference type="ChEBI" id="CHEBI:78673"/>
        <dbReference type="ChEBI" id="CHEBI:131607"/>
    </reaction>
    <physiologicalReaction direction="left-to-right" evidence="4">
        <dbReference type="Rhea" id="RHEA:69652"/>
    </physiologicalReaction>
</comment>
<comment type="catalytic activity">
    <reaction evidence="4">
        <text>(13S)-hydroperoxy-(9Z,11E)-octadecadienoate + 2 glutathione = (13S)-hydroxy-(9Z,11E)-octadecadienoate + glutathione disulfide + H2O</text>
        <dbReference type="Rhea" id="RHEA:48888"/>
        <dbReference type="ChEBI" id="CHEBI:15377"/>
        <dbReference type="ChEBI" id="CHEBI:57466"/>
        <dbReference type="ChEBI" id="CHEBI:57925"/>
        <dbReference type="ChEBI" id="CHEBI:58297"/>
        <dbReference type="ChEBI" id="CHEBI:90850"/>
    </reaction>
    <physiologicalReaction direction="left-to-right" evidence="4">
        <dbReference type="Rhea" id="RHEA:48889"/>
    </physiologicalReaction>
</comment>
<comment type="catalytic activity">
    <reaction evidence="4">
        <text>(9S)-hydroperoxy-(10E,12Z)-octadecadienoate + 2 glutathione = (9S)-hydroxy-(10E,12Z)-octadecadienoate + glutathione disulfide + H2O</text>
        <dbReference type="Rhea" id="RHEA:76687"/>
        <dbReference type="ChEBI" id="CHEBI:15377"/>
        <dbReference type="ChEBI" id="CHEBI:57925"/>
        <dbReference type="ChEBI" id="CHEBI:58297"/>
        <dbReference type="ChEBI" id="CHEBI:60955"/>
        <dbReference type="ChEBI" id="CHEBI:77852"/>
    </reaction>
    <physiologicalReaction direction="left-to-right" evidence="4">
        <dbReference type="Rhea" id="RHEA:76688"/>
    </physiologicalReaction>
</comment>
<comment type="catalytic activity">
    <reaction evidence="4">
        <text>(5S)-hydroperoxy-(6E,8Z,11Z,14Z)-eicosatetraenoate + 2 glutathione = (5S)-hydroxy-(6E,8Z,11Z,14Z)-eicosatetraenoate + glutathione disulfide + H2O</text>
        <dbReference type="Rhea" id="RHEA:48620"/>
        <dbReference type="ChEBI" id="CHEBI:15377"/>
        <dbReference type="ChEBI" id="CHEBI:57450"/>
        <dbReference type="ChEBI" id="CHEBI:57925"/>
        <dbReference type="ChEBI" id="CHEBI:58297"/>
        <dbReference type="ChEBI" id="CHEBI:90632"/>
    </reaction>
    <physiologicalReaction direction="left-to-right" evidence="4">
        <dbReference type="Rhea" id="RHEA:48621"/>
    </physiologicalReaction>
</comment>
<comment type="catalytic activity">
    <reaction evidence="5">
        <text>(12S)-hydroperoxy-(5Z,8Z,10E,14Z)-eicosatetraenoate + 2 glutathione = (12S)-hydroxy-(5Z,8Z,10E,14Z)-eicosatetraenoate + glutathione disulfide + H2O</text>
        <dbReference type="Rhea" id="RHEA:50708"/>
        <dbReference type="ChEBI" id="CHEBI:15377"/>
        <dbReference type="ChEBI" id="CHEBI:57444"/>
        <dbReference type="ChEBI" id="CHEBI:57925"/>
        <dbReference type="ChEBI" id="CHEBI:58297"/>
        <dbReference type="ChEBI" id="CHEBI:90680"/>
    </reaction>
    <physiologicalReaction direction="left-to-right" evidence="5">
        <dbReference type="Rhea" id="RHEA:50709"/>
    </physiologicalReaction>
</comment>
<comment type="catalytic activity">
    <reaction evidence="4">
        <text>(12R)-hydroperoxy-(5Z,8Z,10E,14Z)-eicosatetraenoate + 2 glutathione = (12R)-hydroxy-(5Z,8Z,10E,14Z)-eicosatetraenoate + glutathione disulfide + H2O</text>
        <dbReference type="Rhea" id="RHEA:76691"/>
        <dbReference type="ChEBI" id="CHEBI:15377"/>
        <dbReference type="ChEBI" id="CHEBI:57925"/>
        <dbReference type="ChEBI" id="CHEBI:58297"/>
        <dbReference type="ChEBI" id="CHEBI:75230"/>
        <dbReference type="ChEBI" id="CHEBI:83343"/>
    </reaction>
    <physiologicalReaction direction="left-to-right" evidence="4">
        <dbReference type="Rhea" id="RHEA:76692"/>
    </physiologicalReaction>
</comment>
<comment type="catalytic activity">
    <reaction evidence="4">
        <text>(15S)-hydroperoxy-(5Z,8Z,11Z,13E)-eicosatetraenoate + 2 glutathione = (15S)-hydroxy-(5Z,8Z,11Z,13E)-eicosatetraenoate + glutathione disulfide + H2O</text>
        <dbReference type="Rhea" id="RHEA:76695"/>
        <dbReference type="ChEBI" id="CHEBI:15377"/>
        <dbReference type="ChEBI" id="CHEBI:57409"/>
        <dbReference type="ChEBI" id="CHEBI:57446"/>
        <dbReference type="ChEBI" id="CHEBI:57925"/>
        <dbReference type="ChEBI" id="CHEBI:58297"/>
    </reaction>
    <physiologicalReaction direction="left-to-right" evidence="4">
        <dbReference type="Rhea" id="RHEA:76696"/>
    </physiologicalReaction>
</comment>
<comment type="catalytic activity">
    <reaction evidence="4">
        <text>(5S)-hydroperoxy-(6E,8Z,11Z,14Z,17Z)-eicosapentaenoate + 2 glutathione = (5S)-hydroxy-(6E,8Z,11Z,14Z,17Z)-eicosapentaenoate + glutathione disulfide + H2O</text>
        <dbReference type="Rhea" id="RHEA:76699"/>
        <dbReference type="ChEBI" id="CHEBI:15377"/>
        <dbReference type="ChEBI" id="CHEBI:57925"/>
        <dbReference type="ChEBI" id="CHEBI:58297"/>
        <dbReference type="ChEBI" id="CHEBI:195399"/>
        <dbReference type="ChEBI" id="CHEBI:195400"/>
    </reaction>
    <physiologicalReaction direction="left-to-right" evidence="4">
        <dbReference type="Rhea" id="RHEA:76700"/>
    </physiologicalReaction>
</comment>
<comment type="catalytic activity">
    <reaction evidence="4">
        <text>(12S)-hydroperoxy-(5Z,8Z,10E,14Z,17Z)-eicosapentaenoate + 2 glutathione = (12S)-hydroxy-(5Z,8Z,10E,14Z,17Z)-eicosapentaenoate + glutathione disulfide + H2O</text>
        <dbReference type="Rhea" id="RHEA:76703"/>
        <dbReference type="ChEBI" id="CHEBI:15377"/>
        <dbReference type="ChEBI" id="CHEBI:57925"/>
        <dbReference type="ChEBI" id="CHEBI:58297"/>
        <dbReference type="ChEBI" id="CHEBI:90772"/>
        <dbReference type="ChEBI" id="CHEBI:195401"/>
    </reaction>
    <physiologicalReaction direction="left-to-right" evidence="4">
        <dbReference type="Rhea" id="RHEA:76704"/>
    </physiologicalReaction>
</comment>
<comment type="catalytic activity">
    <reaction evidence="4">
        <text>(15S)-hydroperoxy-(5Z,8Z,11Z,13E,17Z)-eicosapentaenoate + 2 glutathione = (15S)-hydroxy-(5Z,8Z,11Z,13E,17Z)-eicosapentaenoate + glutathione disulfide + H2O</text>
        <dbReference type="Rhea" id="RHEA:76707"/>
        <dbReference type="ChEBI" id="CHEBI:15377"/>
        <dbReference type="ChEBI" id="CHEBI:57925"/>
        <dbReference type="ChEBI" id="CHEBI:58297"/>
        <dbReference type="ChEBI" id="CHEBI:132087"/>
        <dbReference type="ChEBI" id="CHEBI:194369"/>
    </reaction>
    <physiologicalReaction direction="left-to-right" evidence="4">
        <dbReference type="Rhea" id="RHEA:76708"/>
    </physiologicalReaction>
</comment>
<comment type="catalytic activity">
    <reaction evidence="4">
        <text>(15S)-hydroperoxy-(11Z,13E)-eicosadienoate + 2 glutathione = (15S)-hydroxy-(11Z,13E)-eicosadienoate + glutathione disulfide + H2O</text>
        <dbReference type="Rhea" id="RHEA:76711"/>
        <dbReference type="ChEBI" id="CHEBI:15377"/>
        <dbReference type="ChEBI" id="CHEBI:57925"/>
        <dbReference type="ChEBI" id="CHEBI:58297"/>
        <dbReference type="ChEBI" id="CHEBI:144832"/>
        <dbReference type="ChEBI" id="CHEBI:195402"/>
    </reaction>
    <physiologicalReaction direction="left-to-right" evidence="4">
        <dbReference type="Rhea" id="RHEA:76712"/>
    </physiologicalReaction>
</comment>
<comment type="catalytic activity">
    <reaction evidence="4">
        <text>(17S)-hydroperoxy-(4Z,7Z,10Z,13Z,15E,19Z)-docosahexaenoate + 2 glutathione = (17S)-hydroxy-(4Z,7Z,10Z,13Z,15E,19Z)-docosahexaenoate + glutathione disulfide + H2O</text>
        <dbReference type="Rhea" id="RHEA:76715"/>
        <dbReference type="ChEBI" id="CHEBI:15377"/>
        <dbReference type="ChEBI" id="CHEBI:57925"/>
        <dbReference type="ChEBI" id="CHEBI:58297"/>
        <dbReference type="ChEBI" id="CHEBI:133795"/>
        <dbReference type="ChEBI" id="CHEBI:195403"/>
    </reaction>
    <physiologicalReaction direction="left-to-right" evidence="4">
        <dbReference type="Rhea" id="RHEA:76716"/>
    </physiologicalReaction>
</comment>
<comment type="subunit">
    <text evidence="5">Homotetramer. Interacts with MIEN1 (By similarity).</text>
</comment>
<comment type="subcellular location">
    <subcellularLocation>
        <location evidence="5">Cytoplasm</location>
    </subcellularLocation>
    <subcellularLocation>
        <location evidence="5">Mitochondrion</location>
    </subcellularLocation>
</comment>
<comment type="PTM">
    <text evidence="5">During periods of oxidative stress, Sec-47 may react with a superoxide radical, irreversibly lose hydroselenide and be converted to dehydroalanine.</text>
</comment>
<comment type="similarity">
    <text evidence="6">Belongs to the glutathione peroxidase family.</text>
</comment>
<reference key="1">
    <citation type="journal article" date="2005" name="Comp. Biochem. Physiol.">
        <title>Structure, gene expression, and evolution of primate glutathione peroxidases.</title>
        <authorList>
            <person name="Fukuhara R."/>
            <person name="Kageyama T."/>
        </authorList>
    </citation>
    <scope>NUCLEOTIDE SEQUENCE [MRNA]</scope>
</reference>
<protein>
    <recommendedName>
        <fullName evidence="6">Glutathione peroxidase 1</fullName>
        <shortName>GPx-1</shortName>
        <shortName>GSHPx-1</shortName>
        <ecNumber evidence="4">1.11.1.9</ecNumber>
    </recommendedName>
    <alternativeName>
        <fullName>Cellular glutathione peroxidase</fullName>
    </alternativeName>
    <alternativeName>
        <fullName>Phospholipid-hydroperoxide glutathione peroxidase GPX1</fullName>
        <ecNumber evidence="4">1.11.1.12</ecNumber>
    </alternativeName>
</protein>
<keyword id="KW-0007">Acetylation</keyword>
<keyword id="KW-0963">Cytoplasm</keyword>
<keyword id="KW-0443">Lipid metabolism</keyword>
<keyword id="KW-0496">Mitochondrion</keyword>
<keyword id="KW-0560">Oxidoreductase</keyword>
<keyword id="KW-0575">Peroxidase</keyword>
<keyword id="KW-0597">Phosphoprotein</keyword>
<keyword id="KW-1185">Reference proteome</keyword>
<keyword id="KW-0712">Selenocysteine</keyword>
<dbReference type="EC" id="1.11.1.9" evidence="4"/>
<dbReference type="EC" id="1.11.1.12" evidence="4"/>
<dbReference type="EMBL" id="AB121000">
    <property type="protein sequence ID" value="BAF31851.1"/>
    <property type="molecule type" value="mRNA"/>
</dbReference>
<dbReference type="FunCoup" id="Q0EF99">
    <property type="interactions" value="743"/>
</dbReference>
<dbReference type="STRING" id="9483.ENSCJAP00000070336"/>
<dbReference type="InParanoid" id="Q0EF99"/>
<dbReference type="Proteomes" id="UP000008225">
    <property type="component" value="Unplaced"/>
</dbReference>
<dbReference type="GO" id="GO:0005829">
    <property type="term" value="C:cytosol"/>
    <property type="evidence" value="ECO:0000250"/>
    <property type="project" value="UniProtKB"/>
</dbReference>
<dbReference type="GO" id="GO:0005739">
    <property type="term" value="C:mitochondrion"/>
    <property type="evidence" value="ECO:0007669"/>
    <property type="project" value="UniProtKB-SubCell"/>
</dbReference>
<dbReference type="GO" id="GO:0004602">
    <property type="term" value="F:glutathione peroxidase activity"/>
    <property type="evidence" value="ECO:0000250"/>
    <property type="project" value="UniProtKB"/>
</dbReference>
<dbReference type="GO" id="GO:0047066">
    <property type="term" value="F:phospholipid-hydroperoxide glutathione peroxidase activity"/>
    <property type="evidence" value="ECO:0000250"/>
    <property type="project" value="UniProtKB"/>
</dbReference>
<dbReference type="GO" id="GO:0019369">
    <property type="term" value="P:arachidonate metabolic process"/>
    <property type="evidence" value="ECO:0000250"/>
    <property type="project" value="UniProtKB"/>
</dbReference>
<dbReference type="GO" id="GO:0006749">
    <property type="term" value="P:glutathione metabolic process"/>
    <property type="evidence" value="ECO:0007669"/>
    <property type="project" value="TreeGrafter"/>
</dbReference>
<dbReference type="GO" id="GO:0042744">
    <property type="term" value="P:hydrogen peroxide catabolic process"/>
    <property type="evidence" value="ECO:0007669"/>
    <property type="project" value="TreeGrafter"/>
</dbReference>
<dbReference type="GO" id="GO:0019372">
    <property type="term" value="P:lipoxygenase pathway"/>
    <property type="evidence" value="ECO:0000250"/>
    <property type="project" value="UniProtKB"/>
</dbReference>
<dbReference type="GO" id="GO:0042542">
    <property type="term" value="P:response to hydrogen peroxide"/>
    <property type="evidence" value="ECO:0007669"/>
    <property type="project" value="TreeGrafter"/>
</dbReference>
<dbReference type="GO" id="GO:0010269">
    <property type="term" value="P:response to selenium ion"/>
    <property type="evidence" value="ECO:0007669"/>
    <property type="project" value="TreeGrafter"/>
</dbReference>
<dbReference type="CDD" id="cd00340">
    <property type="entry name" value="GSH_Peroxidase"/>
    <property type="match status" value="1"/>
</dbReference>
<dbReference type="FunFam" id="3.40.30.10:FF:000153">
    <property type="entry name" value="Glutathione peroxidase"/>
    <property type="match status" value="1"/>
</dbReference>
<dbReference type="Gene3D" id="3.40.30.10">
    <property type="entry name" value="Glutaredoxin"/>
    <property type="match status" value="1"/>
</dbReference>
<dbReference type="InterPro" id="IPR000889">
    <property type="entry name" value="Glutathione_peroxidase"/>
</dbReference>
<dbReference type="InterPro" id="IPR029759">
    <property type="entry name" value="GPX_AS"/>
</dbReference>
<dbReference type="InterPro" id="IPR036249">
    <property type="entry name" value="Thioredoxin-like_sf"/>
</dbReference>
<dbReference type="PANTHER" id="PTHR11592">
    <property type="entry name" value="GLUTATHIONE PEROXIDASE"/>
    <property type="match status" value="1"/>
</dbReference>
<dbReference type="PANTHER" id="PTHR11592:SF41">
    <property type="entry name" value="GLUTATHIONE PEROXIDASE 1"/>
    <property type="match status" value="1"/>
</dbReference>
<dbReference type="Pfam" id="PF00255">
    <property type="entry name" value="GSHPx"/>
    <property type="match status" value="1"/>
</dbReference>
<dbReference type="PIRSF" id="PIRSF000303">
    <property type="entry name" value="Glutathion_perox"/>
    <property type="match status" value="1"/>
</dbReference>
<dbReference type="PRINTS" id="PR01011">
    <property type="entry name" value="GLUTPROXDASE"/>
</dbReference>
<dbReference type="SUPFAM" id="SSF52833">
    <property type="entry name" value="Thioredoxin-like"/>
    <property type="match status" value="1"/>
</dbReference>
<dbReference type="PROSITE" id="PS00460">
    <property type="entry name" value="GLUTATHIONE_PEROXID_1"/>
    <property type="match status" value="1"/>
</dbReference>
<dbReference type="PROSITE" id="PS51355">
    <property type="entry name" value="GLUTATHIONE_PEROXID_3"/>
    <property type="match status" value="1"/>
</dbReference>
<sequence length="201" mass="21785">MCAAGLAAAAAQSVYAFSARQLAGGEPVSLGSLRCKGLLIENVASLUGTTVRDYTQMNEPQRRLGPRGLVVLGFPCNHSGHQENAKNEEILNSLKYVRPGGGFEPNFMLFEKGEVNGAGAHTLFAFLREALPAPSDDATALMIDPKLITWSPVCRNDVAWNFEKFLVGPDGVPLRRYSRRFQTIDIEPDIEALLSQGPSCA</sequence>
<gene>
    <name type="primary">GPX1</name>
</gene>
<feature type="chain" id="PRO_0000318642" description="Glutathione peroxidase 1">
    <location>
        <begin position="1"/>
        <end position="201"/>
    </location>
</feature>
<feature type="active site" evidence="2">
    <location>
        <position position="47"/>
    </location>
</feature>
<feature type="site" description="Subject to oxidation and hydroselenide loss to dehydroalanine" evidence="1">
    <location>
        <position position="47"/>
    </location>
</feature>
<feature type="non-standard amino acid" description="Selenocysteine" evidence="5">
    <location>
        <position position="47"/>
    </location>
</feature>
<feature type="modified residue" description="Phosphoserine" evidence="3">
    <location>
        <position position="32"/>
    </location>
</feature>
<feature type="modified residue" description="N6-acetyllysine; alternate" evidence="5">
    <location>
        <position position="86"/>
    </location>
</feature>
<feature type="modified residue" description="N6-succinyllysine; alternate" evidence="5">
    <location>
        <position position="86"/>
    </location>
</feature>
<feature type="modified residue" description="N6-acetyllysine; alternate" evidence="5">
    <location>
        <position position="112"/>
    </location>
</feature>
<feature type="modified residue" description="N6-succinyllysine; alternate" evidence="5">
    <location>
        <position position="112"/>
    </location>
</feature>
<feature type="modified residue" description="N6-acetyllysine; alternate" evidence="5">
    <location>
        <position position="146"/>
    </location>
</feature>
<feature type="modified residue" description="N6-succinyllysine; alternate" evidence="5">
    <location>
        <position position="146"/>
    </location>
</feature>
<feature type="modified residue" description="Phosphoserine" evidence="3">
    <location>
        <position position="195"/>
    </location>
</feature>
<feature type="modified residue" description="Phosphoserine" evidence="4">
    <location>
        <position position="199"/>
    </location>
</feature>
<accession>Q0EF99</accession>